<name>LEF2_NPVAG</name>
<proteinExistence type="inferred from homology"/>
<protein>
    <recommendedName>
        <fullName>Late expression factor 2</fullName>
    </recommendedName>
</protein>
<keyword id="KW-0426">Late protein</keyword>
<keyword id="KW-0804">Transcription</keyword>
<keyword id="KW-0805">Transcription regulation</keyword>
<accession>P81473</accession>
<accession>Q9DHF9</accession>
<feature type="chain" id="PRO_0000132819" description="Late expression factor 2">
    <location>
        <begin position="1"/>
        <end position="204"/>
    </location>
</feature>
<sequence length="204" mass="22288">MASTTVWNPAAGVGSLKNSEKYLIDPDDFVGVLALSPCTVFKQGLFVEMSGLRLRALLTATKPAEPKRAVLHRSKRNVCLKACADGSINLAKALSSLRMPLCMVKIMTELSNASAPRGGMYRKRFEFTCYLGNVVSCTKCKSACLIDALLHFYKMDPKCVGEVMHLLIKAEDVYKPSNCVKMKAVNKLCPKAGTCKGKNPICNF</sequence>
<dbReference type="EMBL" id="Y17753">
    <property type="protein sequence ID" value="CAC03566.1"/>
    <property type="molecule type" value="Genomic_DNA"/>
</dbReference>
<dbReference type="PIR" id="PQ0391">
    <property type="entry name" value="PQ0391"/>
</dbReference>
<dbReference type="RefSeq" id="YP_803397.1">
    <property type="nucleotide sequence ID" value="NC_008520.2"/>
</dbReference>
<dbReference type="KEGG" id="vg:5141072"/>
<dbReference type="OrthoDB" id="19212at10239"/>
<dbReference type="GO" id="GO:0019079">
    <property type="term" value="P:viral genome replication"/>
    <property type="evidence" value="ECO:0000250"/>
    <property type="project" value="UniProtKB"/>
</dbReference>
<dbReference type="GO" id="GO:0019083">
    <property type="term" value="P:viral transcription"/>
    <property type="evidence" value="ECO:0007669"/>
    <property type="project" value="InterPro"/>
</dbReference>
<dbReference type="InterPro" id="IPR004283">
    <property type="entry name" value="Lef-2"/>
</dbReference>
<dbReference type="Pfam" id="PF03041">
    <property type="entry name" value="Baculo_LEF-2"/>
    <property type="match status" value="1"/>
</dbReference>
<gene>
    <name type="primary">LEF-2</name>
</gene>
<organism>
    <name type="scientific">Anticarsia gemmatalis nuclear polyhedrosis virus</name>
    <name type="common">AgMNPV</name>
    <dbReference type="NCBI Taxonomy" id="31507"/>
    <lineage>
        <taxon>Viruses</taxon>
        <taxon>Viruses incertae sedis</taxon>
        <taxon>Naldaviricetes</taxon>
        <taxon>Lefavirales</taxon>
        <taxon>Baculoviridae</taxon>
        <taxon>Alphabaculovirus</taxon>
    </lineage>
</organism>
<organismHost>
    <name type="scientific">Lepidoptera</name>
    <name type="common">butterflies and moths</name>
    <dbReference type="NCBI Taxonomy" id="7088"/>
</organismHost>
<comment type="function">
    <text evidence="1">Required for late and very late gene expression. Specifically required for expression from the vp39 and polh promoters (By similarity).</text>
</comment>
<comment type="similarity">
    <text evidence="2">Belongs to the baculoviridae LEF-2 family.</text>
</comment>
<reference key="1">
    <citation type="submission" date="2000-08" db="EMBL/GenBank/DDBJ databases">
        <authorList>
            <person name="Zanotto P.M.A."/>
        </authorList>
    </citation>
    <scope>NUCLEOTIDE SEQUENCE [GENOMIC DNA]</scope>
    <source>
        <strain>2D</strain>
    </source>
</reference>
<reference key="2">
    <citation type="journal article" date="1992" name="J. Gen. Virol.">
        <title>The Anticarsia gemmatalis nuclear polyhedrosis virus polyhedrin gene region: sequence analysis, gene product and structural comparisons.</title>
        <authorList>
            <person name="Zanotto P.M.A."/>
            <person name="Sampaio M.J.A."/>
            <person name="Johnson D.W."/>
            <person name="Rocha T.L."/>
            <person name="Maruniak J.E."/>
        </authorList>
    </citation>
    <scope>NUCLEOTIDE SEQUENCE [GENOMIC DNA] OF 99-204</scope>
    <source>
        <strain>2D</strain>
    </source>
</reference>
<evidence type="ECO:0000250" key="1"/>
<evidence type="ECO:0000305" key="2"/>